<gene>
    <name evidence="1" type="primary">murG</name>
    <name type="ordered locus">Ecok1_00810</name>
    <name type="ORF">APECO1_1896</name>
</gene>
<proteinExistence type="inferred from homology"/>
<organism>
    <name type="scientific">Escherichia coli O1:K1 / APEC</name>
    <dbReference type="NCBI Taxonomy" id="405955"/>
    <lineage>
        <taxon>Bacteria</taxon>
        <taxon>Pseudomonadati</taxon>
        <taxon>Pseudomonadota</taxon>
        <taxon>Gammaproteobacteria</taxon>
        <taxon>Enterobacterales</taxon>
        <taxon>Enterobacteriaceae</taxon>
        <taxon>Escherichia</taxon>
    </lineage>
</organism>
<evidence type="ECO:0000255" key="1">
    <source>
        <dbReference type="HAMAP-Rule" id="MF_00033"/>
    </source>
</evidence>
<comment type="function">
    <text evidence="1">Cell wall formation. Catalyzes the transfer of a GlcNAc subunit on undecaprenyl-pyrophosphoryl-MurNAc-pentapeptide (lipid intermediate I) to form undecaprenyl-pyrophosphoryl-MurNAc-(pentapeptide)GlcNAc (lipid intermediate II).</text>
</comment>
<comment type="catalytic activity">
    <reaction evidence="1">
        <text>di-trans,octa-cis-undecaprenyl diphospho-N-acetyl-alpha-D-muramoyl-L-alanyl-D-glutamyl-meso-2,6-diaminopimeloyl-D-alanyl-D-alanine + UDP-N-acetyl-alpha-D-glucosamine = di-trans,octa-cis-undecaprenyl diphospho-[N-acetyl-alpha-D-glucosaminyl-(1-&gt;4)]-N-acetyl-alpha-D-muramoyl-L-alanyl-D-glutamyl-meso-2,6-diaminopimeloyl-D-alanyl-D-alanine + UDP + H(+)</text>
        <dbReference type="Rhea" id="RHEA:31227"/>
        <dbReference type="ChEBI" id="CHEBI:15378"/>
        <dbReference type="ChEBI" id="CHEBI:57705"/>
        <dbReference type="ChEBI" id="CHEBI:58223"/>
        <dbReference type="ChEBI" id="CHEBI:61387"/>
        <dbReference type="ChEBI" id="CHEBI:61388"/>
        <dbReference type="EC" id="2.4.1.227"/>
    </reaction>
</comment>
<comment type="pathway">
    <text evidence="1">Cell wall biogenesis; peptidoglycan biosynthesis.</text>
</comment>
<comment type="subcellular location">
    <subcellularLocation>
        <location evidence="1">Cell inner membrane</location>
        <topology evidence="1">Peripheral membrane protein</topology>
        <orientation evidence="1">Cytoplasmic side</orientation>
    </subcellularLocation>
</comment>
<comment type="similarity">
    <text evidence="1">Belongs to the glycosyltransferase 28 family. MurG subfamily.</text>
</comment>
<keyword id="KW-0131">Cell cycle</keyword>
<keyword id="KW-0132">Cell division</keyword>
<keyword id="KW-0997">Cell inner membrane</keyword>
<keyword id="KW-1003">Cell membrane</keyword>
<keyword id="KW-0133">Cell shape</keyword>
<keyword id="KW-0961">Cell wall biogenesis/degradation</keyword>
<keyword id="KW-0328">Glycosyltransferase</keyword>
<keyword id="KW-0472">Membrane</keyword>
<keyword id="KW-0573">Peptidoglycan synthesis</keyword>
<keyword id="KW-1185">Reference proteome</keyword>
<keyword id="KW-0808">Transferase</keyword>
<dbReference type="EC" id="2.4.1.227" evidence="1"/>
<dbReference type="EMBL" id="CP000468">
    <property type="protein sequence ID" value="ABI99574.1"/>
    <property type="molecule type" value="Genomic_DNA"/>
</dbReference>
<dbReference type="RefSeq" id="WP_000016562.1">
    <property type="nucleotide sequence ID" value="NZ_CADILS010000048.1"/>
</dbReference>
<dbReference type="SMR" id="A1A7D5"/>
<dbReference type="CAZy" id="GT28">
    <property type="family name" value="Glycosyltransferase Family 28"/>
</dbReference>
<dbReference type="KEGG" id="ecv:APECO1_1896"/>
<dbReference type="HOGENOM" id="CLU_037404_2_0_6"/>
<dbReference type="UniPathway" id="UPA00219"/>
<dbReference type="Proteomes" id="UP000008216">
    <property type="component" value="Chromosome"/>
</dbReference>
<dbReference type="GO" id="GO:0005886">
    <property type="term" value="C:plasma membrane"/>
    <property type="evidence" value="ECO:0007669"/>
    <property type="project" value="UniProtKB-SubCell"/>
</dbReference>
<dbReference type="GO" id="GO:0051991">
    <property type="term" value="F:UDP-N-acetyl-D-glucosamine:N-acetylmuramoyl-L-alanyl-D-glutamyl-meso-2,6-diaminopimelyl-D-alanyl-D-alanine-diphosphoundecaprenol 4-beta-N-acetylglucosaminlytransferase activity"/>
    <property type="evidence" value="ECO:0007669"/>
    <property type="project" value="RHEA"/>
</dbReference>
<dbReference type="GO" id="GO:0050511">
    <property type="term" value="F:undecaprenyldiphospho-muramoylpentapeptide beta-N-acetylglucosaminyltransferase activity"/>
    <property type="evidence" value="ECO:0007669"/>
    <property type="project" value="UniProtKB-UniRule"/>
</dbReference>
<dbReference type="GO" id="GO:0005975">
    <property type="term" value="P:carbohydrate metabolic process"/>
    <property type="evidence" value="ECO:0007669"/>
    <property type="project" value="InterPro"/>
</dbReference>
<dbReference type="GO" id="GO:0051301">
    <property type="term" value="P:cell division"/>
    <property type="evidence" value="ECO:0007669"/>
    <property type="project" value="UniProtKB-KW"/>
</dbReference>
<dbReference type="GO" id="GO:0071555">
    <property type="term" value="P:cell wall organization"/>
    <property type="evidence" value="ECO:0007669"/>
    <property type="project" value="UniProtKB-KW"/>
</dbReference>
<dbReference type="GO" id="GO:0030259">
    <property type="term" value="P:lipid glycosylation"/>
    <property type="evidence" value="ECO:0007669"/>
    <property type="project" value="UniProtKB-UniRule"/>
</dbReference>
<dbReference type="GO" id="GO:0009252">
    <property type="term" value="P:peptidoglycan biosynthetic process"/>
    <property type="evidence" value="ECO:0007669"/>
    <property type="project" value="UniProtKB-UniRule"/>
</dbReference>
<dbReference type="GO" id="GO:0008360">
    <property type="term" value="P:regulation of cell shape"/>
    <property type="evidence" value="ECO:0007669"/>
    <property type="project" value="UniProtKB-KW"/>
</dbReference>
<dbReference type="CDD" id="cd03785">
    <property type="entry name" value="GT28_MurG"/>
    <property type="match status" value="1"/>
</dbReference>
<dbReference type="FunFam" id="3.40.50.2000:FF:000016">
    <property type="entry name" value="UDP-N-acetylglucosamine--N-acetylmuramyl-(pentapeptide) pyrophosphoryl-undecaprenol N-acetylglucosamine transferase"/>
    <property type="match status" value="1"/>
</dbReference>
<dbReference type="FunFam" id="3.40.50.2000:FF:000018">
    <property type="entry name" value="UDP-N-acetylglucosamine--N-acetylmuramyl-(pentapeptide) pyrophosphoryl-undecaprenol N-acetylglucosamine transferase"/>
    <property type="match status" value="1"/>
</dbReference>
<dbReference type="Gene3D" id="3.40.50.2000">
    <property type="entry name" value="Glycogen Phosphorylase B"/>
    <property type="match status" value="2"/>
</dbReference>
<dbReference type="HAMAP" id="MF_00033">
    <property type="entry name" value="MurG"/>
    <property type="match status" value="1"/>
</dbReference>
<dbReference type="InterPro" id="IPR006009">
    <property type="entry name" value="GlcNAc_MurG"/>
</dbReference>
<dbReference type="InterPro" id="IPR007235">
    <property type="entry name" value="Glyco_trans_28_C"/>
</dbReference>
<dbReference type="InterPro" id="IPR004276">
    <property type="entry name" value="GlycoTrans_28_N"/>
</dbReference>
<dbReference type="NCBIfam" id="TIGR01133">
    <property type="entry name" value="murG"/>
    <property type="match status" value="1"/>
</dbReference>
<dbReference type="PANTHER" id="PTHR21015:SF22">
    <property type="entry name" value="GLYCOSYLTRANSFERASE"/>
    <property type="match status" value="1"/>
</dbReference>
<dbReference type="PANTHER" id="PTHR21015">
    <property type="entry name" value="UDP-N-ACETYLGLUCOSAMINE--N-ACETYLMURAMYL-(PENTAPEPTIDE) PYROPHOSPHORYL-UNDECAPRENOL N-ACETYLGLUCOSAMINE TRANSFERASE 1"/>
    <property type="match status" value="1"/>
</dbReference>
<dbReference type="Pfam" id="PF04101">
    <property type="entry name" value="Glyco_tran_28_C"/>
    <property type="match status" value="1"/>
</dbReference>
<dbReference type="Pfam" id="PF03033">
    <property type="entry name" value="Glyco_transf_28"/>
    <property type="match status" value="1"/>
</dbReference>
<dbReference type="SUPFAM" id="SSF53756">
    <property type="entry name" value="UDP-Glycosyltransferase/glycogen phosphorylase"/>
    <property type="match status" value="1"/>
</dbReference>
<protein>
    <recommendedName>
        <fullName evidence="1">UDP-N-acetylglucosamine--N-acetylmuramyl-(pentapeptide) pyrophosphoryl-undecaprenol N-acetylglucosamine transferase</fullName>
        <ecNumber evidence="1">2.4.1.227</ecNumber>
    </recommendedName>
    <alternativeName>
        <fullName evidence="1">Undecaprenyl-PP-MurNAc-pentapeptide-UDPGlcNAc GlcNAc transferase</fullName>
    </alternativeName>
</protein>
<feature type="chain" id="PRO_1000002641" description="UDP-N-acetylglucosamine--N-acetylmuramyl-(pentapeptide) pyrophosphoryl-undecaprenol N-acetylglucosamine transferase">
    <location>
        <begin position="1"/>
        <end position="355"/>
    </location>
</feature>
<feature type="binding site" evidence="1">
    <location>
        <begin position="15"/>
        <end position="17"/>
    </location>
    <ligand>
        <name>UDP-N-acetyl-alpha-D-glucosamine</name>
        <dbReference type="ChEBI" id="CHEBI:57705"/>
    </ligand>
</feature>
<feature type="binding site" evidence="1">
    <location>
        <position position="127"/>
    </location>
    <ligand>
        <name>UDP-N-acetyl-alpha-D-glucosamine</name>
        <dbReference type="ChEBI" id="CHEBI:57705"/>
    </ligand>
</feature>
<feature type="binding site" evidence="1">
    <location>
        <position position="163"/>
    </location>
    <ligand>
        <name>UDP-N-acetyl-alpha-D-glucosamine</name>
        <dbReference type="ChEBI" id="CHEBI:57705"/>
    </ligand>
</feature>
<feature type="binding site" evidence="1">
    <location>
        <position position="191"/>
    </location>
    <ligand>
        <name>UDP-N-acetyl-alpha-D-glucosamine</name>
        <dbReference type="ChEBI" id="CHEBI:57705"/>
    </ligand>
</feature>
<feature type="binding site" evidence="1">
    <location>
        <position position="244"/>
    </location>
    <ligand>
        <name>UDP-N-acetyl-alpha-D-glucosamine</name>
        <dbReference type="ChEBI" id="CHEBI:57705"/>
    </ligand>
</feature>
<feature type="binding site" evidence="1">
    <location>
        <begin position="263"/>
        <end position="268"/>
    </location>
    <ligand>
        <name>UDP-N-acetyl-alpha-D-glucosamine</name>
        <dbReference type="ChEBI" id="CHEBI:57705"/>
    </ligand>
</feature>
<feature type="binding site" evidence="1">
    <location>
        <position position="288"/>
    </location>
    <ligand>
        <name>UDP-N-acetyl-alpha-D-glucosamine</name>
        <dbReference type="ChEBI" id="CHEBI:57705"/>
    </ligand>
</feature>
<name>MURG_ECOK1</name>
<reference key="1">
    <citation type="journal article" date="2007" name="J. Bacteriol.">
        <title>The genome sequence of avian pathogenic Escherichia coli strain O1:K1:H7 shares strong similarities with human extraintestinal pathogenic E. coli genomes.</title>
        <authorList>
            <person name="Johnson T.J."/>
            <person name="Kariyawasam S."/>
            <person name="Wannemuehler Y."/>
            <person name="Mangiamele P."/>
            <person name="Johnson S.J."/>
            <person name="Doetkott C."/>
            <person name="Skyberg J.A."/>
            <person name="Lynne A.M."/>
            <person name="Johnson J.R."/>
            <person name="Nolan L.K."/>
        </authorList>
    </citation>
    <scope>NUCLEOTIDE SEQUENCE [LARGE SCALE GENOMIC DNA]</scope>
</reference>
<sequence length="355" mass="37789">MSGQGKRLMVMAGGTGGHVFPGLAVAHHLMAQGWQVRWLGTADRMEADLVPKHGIEIDFIRISGLRGKGIKALIAAPLRIFNAWRQARAIMKAYKPDVVLGMGGYVSGPGGLAAWSLGIPVVLHEQNGIAGLTNKWLAKIATKVMQAFPGAFPNAEVVGNPVRTDVLALPLPQQRLAGREGPVRVLVVGGSQGARILNQTMPQVAAKLGDSVTIWHQSGKGSQQSVEQAYAEAGQPQHKVTEFIDDMAAAYAWADVVVCRSGALTVSEIAAAGLPALFVPFQHKDRQQYWNALPLEKAGAAKIIEQSQLSVDAVANTLAGWSREILLTMAERARAASIPDATERVANEVSRAARA</sequence>
<accession>A1A7D5</accession>